<reference key="1">
    <citation type="journal article" date="2001" name="J. Bacteriol.">
        <title>Genome sequence and comparative analysis of the solvent-producing bacterium Clostridium acetobutylicum.</title>
        <authorList>
            <person name="Noelling J."/>
            <person name="Breton G."/>
            <person name="Omelchenko M.V."/>
            <person name="Makarova K.S."/>
            <person name="Zeng Q."/>
            <person name="Gibson R."/>
            <person name="Lee H.M."/>
            <person name="Dubois J."/>
            <person name="Qiu D."/>
            <person name="Hitti J."/>
            <person name="Wolf Y.I."/>
            <person name="Tatusov R.L."/>
            <person name="Sabathe F."/>
            <person name="Doucette-Stamm L.A."/>
            <person name="Soucaille P."/>
            <person name="Daly M.J."/>
            <person name="Bennett G.N."/>
            <person name="Koonin E.V."/>
            <person name="Smith D.R."/>
        </authorList>
    </citation>
    <scope>NUCLEOTIDE SEQUENCE [LARGE SCALE GENOMIC DNA]</scope>
    <source>
        <strain>ATCC 824 / DSM 792 / JCM 1419 / IAM 19013 / LMG 5710 / NBRC 13948 / NRRL B-527 / VKM B-1787 / 2291 / W</strain>
    </source>
</reference>
<sequence length="245" mass="27193">MLLLDKINELKKIVAESSSIVFFGGAGVSTESNIPDFRSENGLYKTKNNFSYPPEVMLSHTFFKNHTEDFFEFYREKMIFKDAKPNAAHYSLAKIEEQGKLKAIVTQNIDGLHQLAGSKNVYELHGSIHRNYCMDCGKSFDLEYVIKSETTIPKCDKCGGIVKPDVVLYEEGLDDSIIQNSVKAISEADTLIVGGTSLVVYPAAGLIRYFKGNKLILINKSATAYDNEADLVISDSIGKVLETVI</sequence>
<proteinExistence type="inferred from homology"/>
<accession>Q97MB4</accession>
<gene>
    <name evidence="1" type="primary">cobB</name>
    <name type="ordered locus">CA_C0284</name>
</gene>
<evidence type="ECO:0000255" key="1">
    <source>
        <dbReference type="HAMAP-Rule" id="MF_01968"/>
    </source>
</evidence>
<evidence type="ECO:0000255" key="2">
    <source>
        <dbReference type="PROSITE-ProRule" id="PRU00236"/>
    </source>
</evidence>
<protein>
    <recommendedName>
        <fullName evidence="1">NAD-dependent protein deacetylase</fullName>
        <ecNumber evidence="1 2">2.3.1.286</ecNumber>
    </recommendedName>
    <alternativeName>
        <fullName evidence="1">Regulatory protein SIR2 homolog</fullName>
    </alternativeName>
</protein>
<dbReference type="EC" id="2.3.1.286" evidence="1 2"/>
<dbReference type="EMBL" id="AE001437">
    <property type="protein sequence ID" value="AAK78265.1"/>
    <property type="molecule type" value="Genomic_DNA"/>
</dbReference>
<dbReference type="PIR" id="F96934">
    <property type="entry name" value="F96934"/>
</dbReference>
<dbReference type="RefSeq" id="NP_346925.1">
    <property type="nucleotide sequence ID" value="NC_003030.1"/>
</dbReference>
<dbReference type="RefSeq" id="WP_010963607.1">
    <property type="nucleotide sequence ID" value="NC_003030.1"/>
</dbReference>
<dbReference type="SMR" id="Q97MB4"/>
<dbReference type="STRING" id="272562.CA_C0284"/>
<dbReference type="KEGG" id="cac:CA_C0284"/>
<dbReference type="PATRIC" id="fig|272562.8.peg.471"/>
<dbReference type="eggNOG" id="COG0846">
    <property type="taxonomic scope" value="Bacteria"/>
</dbReference>
<dbReference type="HOGENOM" id="CLU_023643_3_0_9"/>
<dbReference type="OrthoDB" id="9800582at2"/>
<dbReference type="Proteomes" id="UP000000814">
    <property type="component" value="Chromosome"/>
</dbReference>
<dbReference type="GO" id="GO:0005737">
    <property type="term" value="C:cytoplasm"/>
    <property type="evidence" value="ECO:0007669"/>
    <property type="project" value="UniProtKB-SubCell"/>
</dbReference>
<dbReference type="GO" id="GO:0017136">
    <property type="term" value="F:histone deacetylase activity, NAD-dependent"/>
    <property type="evidence" value="ECO:0007669"/>
    <property type="project" value="TreeGrafter"/>
</dbReference>
<dbReference type="GO" id="GO:0070403">
    <property type="term" value="F:NAD+ binding"/>
    <property type="evidence" value="ECO:0007669"/>
    <property type="project" value="UniProtKB-UniRule"/>
</dbReference>
<dbReference type="GO" id="GO:0008270">
    <property type="term" value="F:zinc ion binding"/>
    <property type="evidence" value="ECO:0007669"/>
    <property type="project" value="UniProtKB-UniRule"/>
</dbReference>
<dbReference type="Gene3D" id="3.30.1600.10">
    <property type="entry name" value="SIR2/SIRT2 'Small Domain"/>
    <property type="match status" value="1"/>
</dbReference>
<dbReference type="Gene3D" id="3.40.50.1220">
    <property type="entry name" value="TPP-binding domain"/>
    <property type="match status" value="1"/>
</dbReference>
<dbReference type="HAMAP" id="MF_01968">
    <property type="entry name" value="Sirtuin_ClassU"/>
    <property type="match status" value="1"/>
</dbReference>
<dbReference type="InterPro" id="IPR029035">
    <property type="entry name" value="DHS-like_NAD/FAD-binding_dom"/>
</dbReference>
<dbReference type="InterPro" id="IPR050134">
    <property type="entry name" value="NAD-dep_sirtuin_deacylases"/>
</dbReference>
<dbReference type="InterPro" id="IPR003000">
    <property type="entry name" value="Sirtuin"/>
</dbReference>
<dbReference type="InterPro" id="IPR026591">
    <property type="entry name" value="Sirtuin_cat_small_dom_sf"/>
</dbReference>
<dbReference type="InterPro" id="IPR028628">
    <property type="entry name" value="Sirtuin_class_U"/>
</dbReference>
<dbReference type="InterPro" id="IPR026590">
    <property type="entry name" value="Ssirtuin_cat_dom"/>
</dbReference>
<dbReference type="NCBIfam" id="NF001752">
    <property type="entry name" value="PRK00481.1-1"/>
    <property type="match status" value="1"/>
</dbReference>
<dbReference type="NCBIfam" id="NF001753">
    <property type="entry name" value="PRK00481.1-3"/>
    <property type="match status" value="1"/>
</dbReference>
<dbReference type="PANTHER" id="PTHR11085:SF4">
    <property type="entry name" value="NAD-DEPENDENT PROTEIN DEACYLASE"/>
    <property type="match status" value="1"/>
</dbReference>
<dbReference type="PANTHER" id="PTHR11085">
    <property type="entry name" value="NAD-DEPENDENT PROTEIN DEACYLASE SIRTUIN-5, MITOCHONDRIAL-RELATED"/>
    <property type="match status" value="1"/>
</dbReference>
<dbReference type="Pfam" id="PF02146">
    <property type="entry name" value="SIR2"/>
    <property type="match status" value="1"/>
</dbReference>
<dbReference type="SUPFAM" id="SSF52467">
    <property type="entry name" value="DHS-like NAD/FAD-binding domain"/>
    <property type="match status" value="1"/>
</dbReference>
<dbReference type="PROSITE" id="PS50305">
    <property type="entry name" value="SIRTUIN"/>
    <property type="match status" value="1"/>
</dbReference>
<feature type="chain" id="PRO_0000110305" description="NAD-dependent protein deacetylase">
    <location>
        <begin position="1"/>
        <end position="245"/>
    </location>
</feature>
<feature type="domain" description="Deacetylase sirtuin-type" evidence="2">
    <location>
        <begin position="1"/>
        <end position="245"/>
    </location>
</feature>
<feature type="active site" description="Proton acceptor" evidence="2">
    <location>
        <position position="125"/>
    </location>
</feature>
<feature type="binding site" evidence="1">
    <location>
        <position position="26"/>
    </location>
    <ligand>
        <name>NAD(+)</name>
        <dbReference type="ChEBI" id="CHEBI:57540"/>
    </ligand>
</feature>
<feature type="binding site" evidence="1">
    <location>
        <position position="30"/>
    </location>
    <ligand>
        <name>NAD(+)</name>
        <dbReference type="ChEBI" id="CHEBI:57540"/>
    </ligand>
</feature>
<feature type="binding site" evidence="1">
    <location>
        <position position="37"/>
    </location>
    <ligand>
        <name>NAD(+)</name>
        <dbReference type="ChEBI" id="CHEBI:57540"/>
    </ligand>
</feature>
<feature type="binding site" evidence="1">
    <location>
        <position position="37"/>
    </location>
    <ligand>
        <name>nicotinamide</name>
        <dbReference type="ChEBI" id="CHEBI:17154"/>
    </ligand>
</feature>
<feature type="binding site" evidence="1">
    <location>
        <position position="38"/>
    </location>
    <ligand>
        <name>NAD(+)</name>
        <dbReference type="ChEBI" id="CHEBI:57540"/>
    </ligand>
</feature>
<feature type="binding site" evidence="1">
    <location>
        <position position="107"/>
    </location>
    <ligand>
        <name>NAD(+)</name>
        <dbReference type="ChEBI" id="CHEBI:57540"/>
    </ligand>
</feature>
<feature type="binding site" evidence="1">
    <location>
        <position position="109"/>
    </location>
    <ligand>
        <name>NAD(+)</name>
        <dbReference type="ChEBI" id="CHEBI:57540"/>
    </ligand>
</feature>
<feature type="binding site" evidence="1">
    <location>
        <position position="109"/>
    </location>
    <ligand>
        <name>nicotinamide</name>
        <dbReference type="ChEBI" id="CHEBI:17154"/>
    </ligand>
</feature>
<feature type="binding site" evidence="1">
    <location>
        <position position="110"/>
    </location>
    <ligand>
        <name>NAD(+)</name>
        <dbReference type="ChEBI" id="CHEBI:57540"/>
    </ligand>
</feature>
<feature type="binding site" evidence="1">
    <location>
        <position position="110"/>
    </location>
    <ligand>
        <name>nicotinamide</name>
        <dbReference type="ChEBI" id="CHEBI:17154"/>
    </ligand>
</feature>
<feature type="binding site" evidence="1">
    <location>
        <position position="125"/>
    </location>
    <ligand>
        <name>NAD(+)</name>
        <dbReference type="ChEBI" id="CHEBI:57540"/>
    </ligand>
</feature>
<feature type="binding site" evidence="1">
    <location>
        <position position="133"/>
    </location>
    <ligand>
        <name>Zn(2+)</name>
        <dbReference type="ChEBI" id="CHEBI:29105"/>
    </ligand>
</feature>
<feature type="binding site" evidence="1">
    <location>
        <position position="136"/>
    </location>
    <ligand>
        <name>Zn(2+)</name>
        <dbReference type="ChEBI" id="CHEBI:29105"/>
    </ligand>
</feature>
<feature type="binding site" evidence="1">
    <location>
        <position position="155"/>
    </location>
    <ligand>
        <name>Zn(2+)</name>
        <dbReference type="ChEBI" id="CHEBI:29105"/>
    </ligand>
</feature>
<feature type="binding site" evidence="1">
    <location>
        <position position="158"/>
    </location>
    <ligand>
        <name>Zn(2+)</name>
        <dbReference type="ChEBI" id="CHEBI:29105"/>
    </ligand>
</feature>
<feature type="binding site" evidence="1">
    <location>
        <position position="196"/>
    </location>
    <ligand>
        <name>NAD(+)</name>
        <dbReference type="ChEBI" id="CHEBI:57540"/>
    </ligand>
</feature>
<feature type="binding site" evidence="1">
    <location>
        <position position="197"/>
    </location>
    <ligand>
        <name>NAD(+)</name>
        <dbReference type="ChEBI" id="CHEBI:57540"/>
    </ligand>
</feature>
<feature type="binding site" evidence="1">
    <location>
        <position position="219"/>
    </location>
    <ligand>
        <name>NAD(+)</name>
        <dbReference type="ChEBI" id="CHEBI:57540"/>
    </ligand>
</feature>
<feature type="binding site" evidence="1">
    <location>
        <position position="237"/>
    </location>
    <ligand>
        <name>NAD(+)</name>
        <dbReference type="ChEBI" id="CHEBI:57540"/>
    </ligand>
</feature>
<name>NPD_CLOAB</name>
<comment type="function">
    <text evidence="1">NAD-dependent protein deacetylase which modulates the activities of several enzymes which are inactive in their acetylated form.</text>
</comment>
<comment type="catalytic activity">
    <reaction evidence="1">
        <text>N(6)-acetyl-L-lysyl-[protein] + NAD(+) + H2O = 2''-O-acetyl-ADP-D-ribose + nicotinamide + L-lysyl-[protein]</text>
        <dbReference type="Rhea" id="RHEA:43636"/>
        <dbReference type="Rhea" id="RHEA-COMP:9752"/>
        <dbReference type="Rhea" id="RHEA-COMP:10731"/>
        <dbReference type="ChEBI" id="CHEBI:15377"/>
        <dbReference type="ChEBI" id="CHEBI:17154"/>
        <dbReference type="ChEBI" id="CHEBI:29969"/>
        <dbReference type="ChEBI" id="CHEBI:57540"/>
        <dbReference type="ChEBI" id="CHEBI:61930"/>
        <dbReference type="ChEBI" id="CHEBI:83767"/>
        <dbReference type="EC" id="2.3.1.286"/>
    </reaction>
</comment>
<comment type="cofactor">
    <cofactor evidence="1">
        <name>Zn(2+)</name>
        <dbReference type="ChEBI" id="CHEBI:29105"/>
    </cofactor>
    <text evidence="1">Binds 1 zinc ion per subunit.</text>
</comment>
<comment type="subcellular location">
    <subcellularLocation>
        <location evidence="1">Cytoplasm</location>
    </subcellularLocation>
</comment>
<comment type="similarity">
    <text evidence="1">Belongs to the sirtuin family. Class U subfamily.</text>
</comment>
<keyword id="KW-0963">Cytoplasm</keyword>
<keyword id="KW-0479">Metal-binding</keyword>
<keyword id="KW-0520">NAD</keyword>
<keyword id="KW-1185">Reference proteome</keyword>
<keyword id="KW-0808">Transferase</keyword>
<keyword id="KW-0862">Zinc</keyword>
<organism>
    <name type="scientific">Clostridium acetobutylicum (strain ATCC 824 / DSM 792 / JCM 1419 / IAM 19013 / LMG 5710 / NBRC 13948 / NRRL B-527 / VKM B-1787 / 2291 / W)</name>
    <dbReference type="NCBI Taxonomy" id="272562"/>
    <lineage>
        <taxon>Bacteria</taxon>
        <taxon>Bacillati</taxon>
        <taxon>Bacillota</taxon>
        <taxon>Clostridia</taxon>
        <taxon>Eubacteriales</taxon>
        <taxon>Clostridiaceae</taxon>
        <taxon>Clostridium</taxon>
    </lineage>
</organism>